<protein>
    <recommendedName>
        <fullName evidence="2">dTDP-glucose 4,6-dehydratase 1</fullName>
        <ecNumber evidence="2">4.2.1.46</ecNumber>
    </recommendedName>
</protein>
<sequence>MKILVTGGAGFIGSAVVRHIINNTQDSVVNVDKLTYAGNRESLADVSDSERYVFEHADICDAPAMARIFAQHQPDAVMHLAAESHVDRSITGPAAFIETNIVGTYVLLEAARNYWSALDSDKKNSFRFHHISTDEVYGDLPHPDEVNNTEELPLFTETTAYAPSSPYSASKASSDHLVRAWKRTYGLPTIVTNCSNNYGPYHFPEKLIPLVILNALEGKALPIYGKGDQIRDWLYVEDHARALYTVVTEGKAGETYNIGGHNEKKNIDVVLTICDLLDEIVPKEKSYREQITYVADRPGHDRRYAIDAEKIGRALGWKPQETFESGIRKTVEWYLSNTKWVDNVKSGAYQSWIEQNYEGRQ</sequence>
<feature type="chain" id="PRO_0000183238" description="dTDP-glucose 4,6-dehydratase 1">
    <location>
        <begin position="1"/>
        <end position="361"/>
    </location>
</feature>
<feature type="active site" description="Proton donor" evidence="2">
    <location>
        <position position="134"/>
    </location>
</feature>
<feature type="active site" description="Proton acceptor" evidence="2">
    <location>
        <position position="135"/>
    </location>
</feature>
<feature type="active site" description="Proton acceptor" evidence="2">
    <location>
        <position position="167"/>
    </location>
</feature>
<feature type="binding site" evidence="2">
    <location>
        <begin position="11"/>
        <end position="12"/>
    </location>
    <ligand>
        <name>NAD(+)</name>
        <dbReference type="ChEBI" id="CHEBI:57540"/>
    </ligand>
</feature>
<feature type="binding site" evidence="2">
    <location>
        <begin position="32"/>
        <end position="35"/>
    </location>
    <ligand>
        <name>NAD(+)</name>
        <dbReference type="ChEBI" id="CHEBI:57540"/>
    </ligand>
</feature>
<feature type="binding site" evidence="2">
    <location>
        <begin position="58"/>
        <end position="59"/>
    </location>
    <ligand>
        <name>NAD(+)</name>
        <dbReference type="ChEBI" id="CHEBI:57540"/>
    </ligand>
</feature>
<feature type="binding site" evidence="2">
    <location>
        <begin position="80"/>
        <end position="84"/>
    </location>
    <ligand>
        <name>NAD(+)</name>
        <dbReference type="ChEBI" id="CHEBI:57540"/>
    </ligand>
</feature>
<feature type="binding site" evidence="1">
    <location>
        <position position="84"/>
    </location>
    <ligand>
        <name>substrate</name>
    </ligand>
</feature>
<feature type="binding site" evidence="2">
    <location>
        <position position="99"/>
    </location>
    <ligand>
        <name>NAD(+)</name>
        <dbReference type="ChEBI" id="CHEBI:57540"/>
    </ligand>
</feature>
<feature type="binding site" evidence="1">
    <location>
        <position position="133"/>
    </location>
    <ligand>
        <name>substrate</name>
    </ligand>
</feature>
<feature type="binding site" evidence="2">
    <location>
        <begin position="167"/>
        <end position="171"/>
    </location>
    <ligand>
        <name>NAD(+)</name>
        <dbReference type="ChEBI" id="CHEBI:57540"/>
    </ligand>
</feature>
<feature type="binding site" evidence="1">
    <location>
        <position position="196"/>
    </location>
    <ligand>
        <name>substrate</name>
    </ligand>
</feature>
<feature type="binding site" evidence="2">
    <location>
        <position position="197"/>
    </location>
    <ligand>
        <name>NAD(+)</name>
        <dbReference type="ChEBI" id="CHEBI:57540"/>
    </ligand>
</feature>
<feature type="binding site" evidence="1">
    <location>
        <begin position="206"/>
        <end position="207"/>
    </location>
    <ligand>
        <name>substrate</name>
    </ligand>
</feature>
<feature type="binding site" evidence="1">
    <location>
        <begin position="222"/>
        <end position="224"/>
    </location>
    <ligand>
        <name>substrate</name>
    </ligand>
</feature>
<feature type="binding site" evidence="1">
    <location>
        <position position="231"/>
    </location>
    <ligand>
        <name>substrate</name>
    </ligand>
</feature>
<feature type="binding site" evidence="1">
    <location>
        <position position="266"/>
    </location>
    <ligand>
        <name>substrate</name>
    </ligand>
</feature>
<feature type="binding site" evidence="1">
    <location>
        <begin position="296"/>
        <end position="300"/>
    </location>
    <ligand>
        <name>substrate</name>
    </ligand>
</feature>
<feature type="sequence conflict" description="In Ref. 1; AAB88398." evidence="4" ref="1">
    <original>K</original>
    <variation>E</variation>
    <location>
        <position position="123"/>
    </location>
</feature>
<feature type="sequence conflict" description="In Ref. 1; AAB88398." evidence="4" ref="1">
    <original>G</original>
    <variation>V</variation>
    <location>
        <position position="250"/>
    </location>
</feature>
<name>RMLB1_ECOLI</name>
<evidence type="ECO:0000250" key="1">
    <source>
        <dbReference type="UniProtKB" id="P26391"/>
    </source>
</evidence>
<evidence type="ECO:0000250" key="2">
    <source>
        <dbReference type="UniProtKB" id="P27830"/>
    </source>
</evidence>
<evidence type="ECO:0000269" key="3">
    <source>
    </source>
</evidence>
<evidence type="ECO:0000305" key="4"/>
<dbReference type="EC" id="4.2.1.46" evidence="2"/>
<dbReference type="EMBL" id="U09876">
    <property type="protein sequence ID" value="AAB88398.1"/>
    <property type="molecule type" value="Genomic_DNA"/>
</dbReference>
<dbReference type="EMBL" id="U00096">
    <property type="protein sequence ID" value="AAC75102.1"/>
    <property type="molecule type" value="Genomic_DNA"/>
</dbReference>
<dbReference type="EMBL" id="AP009048">
    <property type="protein sequence ID" value="BAA15883.1"/>
    <property type="molecule type" value="Genomic_DNA"/>
</dbReference>
<dbReference type="PIR" id="H64969">
    <property type="entry name" value="H64969"/>
</dbReference>
<dbReference type="RefSeq" id="NP_416545.1">
    <property type="nucleotide sequence ID" value="NC_000913.3"/>
</dbReference>
<dbReference type="RefSeq" id="WP_000699460.1">
    <property type="nucleotide sequence ID" value="NZ_LN832404.1"/>
</dbReference>
<dbReference type="SMR" id="P37759"/>
<dbReference type="BioGRID" id="4259679">
    <property type="interactions" value="188"/>
</dbReference>
<dbReference type="BioGRID" id="849655">
    <property type="interactions" value="4"/>
</dbReference>
<dbReference type="DIP" id="DIP-10680N"/>
<dbReference type="FunCoup" id="P37759">
    <property type="interactions" value="823"/>
</dbReference>
<dbReference type="IntAct" id="P37759">
    <property type="interactions" value="7"/>
</dbReference>
<dbReference type="STRING" id="511145.b2041"/>
<dbReference type="jPOST" id="P37759"/>
<dbReference type="PaxDb" id="511145-b2041"/>
<dbReference type="EnsemblBacteria" id="AAC75102">
    <property type="protein sequence ID" value="AAC75102"/>
    <property type="gene ID" value="b2041"/>
</dbReference>
<dbReference type="GeneID" id="945276"/>
<dbReference type="KEGG" id="ecj:JW2026"/>
<dbReference type="KEGG" id="eco:b2041"/>
<dbReference type="KEGG" id="ecoc:C3026_11495"/>
<dbReference type="PATRIC" id="fig|1411691.4.peg.210"/>
<dbReference type="EchoBASE" id="EB2311"/>
<dbReference type="eggNOG" id="COG1088">
    <property type="taxonomic scope" value="Bacteria"/>
</dbReference>
<dbReference type="HOGENOM" id="CLU_007383_1_14_6"/>
<dbReference type="InParanoid" id="P37759"/>
<dbReference type="OMA" id="EWCQHVQ"/>
<dbReference type="OrthoDB" id="9803010at2"/>
<dbReference type="PhylomeDB" id="P37759"/>
<dbReference type="BioCyc" id="EcoCyc:DTDPGLUCDEHYDRAT-MONOMER"/>
<dbReference type="BioCyc" id="MetaCyc:DTDPGLUCDEHYDRAT-MONOMER"/>
<dbReference type="SABIO-RK" id="P37759"/>
<dbReference type="UniPathway" id="UPA00124"/>
<dbReference type="UniPathway" id="UPA00281"/>
<dbReference type="PRO" id="PR:P37759"/>
<dbReference type="Proteomes" id="UP000000625">
    <property type="component" value="Chromosome"/>
</dbReference>
<dbReference type="GO" id="GO:0005829">
    <property type="term" value="C:cytosol"/>
    <property type="evidence" value="ECO:0000314"/>
    <property type="project" value="EcoCyc"/>
</dbReference>
<dbReference type="GO" id="GO:0008460">
    <property type="term" value="F:dTDP-glucose 4,6-dehydratase activity"/>
    <property type="evidence" value="ECO:0000314"/>
    <property type="project" value="EcoCyc"/>
</dbReference>
<dbReference type="GO" id="GO:0042802">
    <property type="term" value="F:identical protein binding"/>
    <property type="evidence" value="ECO:0000314"/>
    <property type="project" value="EcoCyc"/>
</dbReference>
<dbReference type="GO" id="GO:0051287">
    <property type="term" value="F:NAD binding"/>
    <property type="evidence" value="ECO:0000314"/>
    <property type="project" value="EcoCyc"/>
</dbReference>
<dbReference type="GO" id="GO:0019305">
    <property type="term" value="P:dTDP-rhamnose biosynthetic process"/>
    <property type="evidence" value="ECO:0007669"/>
    <property type="project" value="UniProtKB-UniPathway"/>
</dbReference>
<dbReference type="GO" id="GO:0009103">
    <property type="term" value="P:lipopolysaccharide biosynthetic process"/>
    <property type="evidence" value="ECO:0000250"/>
    <property type="project" value="UniProtKB"/>
</dbReference>
<dbReference type="GO" id="GO:0009226">
    <property type="term" value="P:nucleotide-sugar biosynthetic process"/>
    <property type="evidence" value="ECO:0000314"/>
    <property type="project" value="EcoCyc"/>
</dbReference>
<dbReference type="GO" id="GO:0009243">
    <property type="term" value="P:O antigen biosynthetic process"/>
    <property type="evidence" value="ECO:0007669"/>
    <property type="project" value="UniProtKB-UniPathway"/>
</dbReference>
<dbReference type="GO" id="GO:0000271">
    <property type="term" value="P:polysaccharide biosynthetic process"/>
    <property type="evidence" value="ECO:0000250"/>
    <property type="project" value="UniProtKB"/>
</dbReference>
<dbReference type="CDD" id="cd05246">
    <property type="entry name" value="dTDP_GD_SDR_e"/>
    <property type="match status" value="1"/>
</dbReference>
<dbReference type="FunFam" id="3.40.50.720:FF:000108">
    <property type="entry name" value="dTDP-glucose 4,6-dehydratase"/>
    <property type="match status" value="1"/>
</dbReference>
<dbReference type="Gene3D" id="3.40.50.720">
    <property type="entry name" value="NAD(P)-binding Rossmann-like Domain"/>
    <property type="match status" value="1"/>
</dbReference>
<dbReference type="Gene3D" id="3.90.25.10">
    <property type="entry name" value="UDP-galactose 4-epimerase, domain 1"/>
    <property type="match status" value="1"/>
</dbReference>
<dbReference type="InterPro" id="IPR005888">
    <property type="entry name" value="dTDP_Gluc_deHydtase"/>
</dbReference>
<dbReference type="InterPro" id="IPR016040">
    <property type="entry name" value="NAD(P)-bd_dom"/>
</dbReference>
<dbReference type="InterPro" id="IPR036291">
    <property type="entry name" value="NAD(P)-bd_dom_sf"/>
</dbReference>
<dbReference type="NCBIfam" id="TIGR01181">
    <property type="entry name" value="dTDP_gluc_dehyt"/>
    <property type="match status" value="1"/>
</dbReference>
<dbReference type="NCBIfam" id="NF007490">
    <property type="entry name" value="PRK10084.1"/>
    <property type="match status" value="1"/>
</dbReference>
<dbReference type="PANTHER" id="PTHR43000">
    <property type="entry name" value="DTDP-D-GLUCOSE 4,6-DEHYDRATASE-RELATED"/>
    <property type="match status" value="1"/>
</dbReference>
<dbReference type="Pfam" id="PF16363">
    <property type="entry name" value="GDP_Man_Dehyd"/>
    <property type="match status" value="1"/>
</dbReference>
<dbReference type="SUPFAM" id="SSF51735">
    <property type="entry name" value="NAD(P)-binding Rossmann-fold domains"/>
    <property type="match status" value="1"/>
</dbReference>
<gene>
    <name type="primary">rfbB</name>
    <name type="synonym">rmlB</name>
    <name type="ordered locus">b2041</name>
    <name type="ordered locus">JW2026</name>
</gene>
<organism>
    <name type="scientific">Escherichia coli (strain K12)</name>
    <dbReference type="NCBI Taxonomy" id="83333"/>
    <lineage>
        <taxon>Bacteria</taxon>
        <taxon>Pseudomonadati</taxon>
        <taxon>Pseudomonadota</taxon>
        <taxon>Gammaproteobacteria</taxon>
        <taxon>Enterobacterales</taxon>
        <taxon>Enterobacteriaceae</taxon>
        <taxon>Escherichia</taxon>
    </lineage>
</organism>
<comment type="function">
    <text evidence="2">Catalyzes the dehydration of dTDP-D-glucose to form dTDP-6-deoxy-D-xylo-4-hexulose via a three-step process involving oxidation, dehydration and reduction.</text>
</comment>
<comment type="catalytic activity">
    <reaction evidence="2">
        <text>dTDP-alpha-D-glucose = dTDP-4-dehydro-6-deoxy-alpha-D-glucose + H2O</text>
        <dbReference type="Rhea" id="RHEA:17221"/>
        <dbReference type="ChEBI" id="CHEBI:15377"/>
        <dbReference type="ChEBI" id="CHEBI:57477"/>
        <dbReference type="ChEBI" id="CHEBI:57649"/>
        <dbReference type="EC" id="4.2.1.46"/>
    </reaction>
</comment>
<comment type="cofactor">
    <cofactor evidence="2">
        <name>NAD(+)</name>
        <dbReference type="ChEBI" id="CHEBI:57540"/>
    </cofactor>
    <text evidence="2">Binds 1 NAD(+) per subunit.</text>
</comment>
<comment type="pathway">
    <text evidence="3">Carbohydrate biosynthesis; dTDP-L-rhamnose biosynthesis.</text>
</comment>
<comment type="pathway">
    <text evidence="3">Bacterial outer membrane biogenesis; LPS O-antigen biosynthesis.</text>
</comment>
<comment type="subunit">
    <text evidence="2">Homodimer.</text>
</comment>
<comment type="similarity">
    <text evidence="2">Belongs to the NAD(P)-dependent epimerase/dehydratase family. dTDP-glucose dehydratase subfamily.</text>
</comment>
<reference key="1">
    <citation type="journal article" date="1994" name="J. Bacteriol.">
        <title>Structure of the O antigen of Escherichia coli K-12 and the sequence of its rfb gene cluster.</title>
        <authorList>
            <person name="Stevenson G."/>
            <person name="Neal B."/>
            <person name="Liu D."/>
            <person name="Hobbs M."/>
            <person name="Packer N.H."/>
            <person name="Batley M."/>
            <person name="Redmond J.W."/>
            <person name="Lindquist L."/>
            <person name="Reeves P.R."/>
        </authorList>
    </citation>
    <scope>NUCLEOTIDE SEQUENCE [GENOMIC DNA]</scope>
    <source>
        <strain>K12 / WG1</strain>
    </source>
</reference>
<reference key="2">
    <citation type="submission" date="1997-12" db="EMBL/GenBank/DDBJ databases">
        <authorList>
            <person name="Stevenson G."/>
        </authorList>
    </citation>
    <scope>SEQUENCE REVISION TO 123 AND 250</scope>
    <source>
        <strain>K12 / WG1</strain>
    </source>
</reference>
<reference key="3">
    <citation type="journal article" date="1996" name="DNA Res.">
        <title>A 460-kb DNA sequence of the Escherichia coli K-12 genome corresponding to the 40.1-50.0 min region on the linkage map.</title>
        <authorList>
            <person name="Itoh T."/>
            <person name="Aiba H."/>
            <person name="Baba T."/>
            <person name="Fujita K."/>
            <person name="Hayashi K."/>
            <person name="Inada T."/>
            <person name="Isono K."/>
            <person name="Kasai H."/>
            <person name="Kimura S."/>
            <person name="Kitakawa M."/>
            <person name="Kitagawa M."/>
            <person name="Makino K."/>
            <person name="Miki T."/>
            <person name="Mizobuchi K."/>
            <person name="Mori H."/>
            <person name="Mori T."/>
            <person name="Motomura K."/>
            <person name="Nakade S."/>
            <person name="Nakamura Y."/>
            <person name="Nashimoto H."/>
            <person name="Nishio Y."/>
            <person name="Oshima T."/>
            <person name="Saito N."/>
            <person name="Sampei G."/>
            <person name="Seki Y."/>
            <person name="Sivasundaram S."/>
            <person name="Tagami H."/>
            <person name="Takeda J."/>
            <person name="Takemoto K."/>
            <person name="Wada C."/>
            <person name="Yamamoto Y."/>
            <person name="Horiuchi T."/>
        </authorList>
    </citation>
    <scope>NUCLEOTIDE SEQUENCE [LARGE SCALE GENOMIC DNA]</scope>
    <source>
        <strain>K12 / W3110 / ATCC 27325 / DSM 5911</strain>
    </source>
</reference>
<reference key="4">
    <citation type="journal article" date="1997" name="Science">
        <title>The complete genome sequence of Escherichia coli K-12.</title>
        <authorList>
            <person name="Blattner F.R."/>
            <person name="Plunkett G. III"/>
            <person name="Bloch C.A."/>
            <person name="Perna N.T."/>
            <person name="Burland V."/>
            <person name="Riley M."/>
            <person name="Collado-Vides J."/>
            <person name="Glasner J.D."/>
            <person name="Rode C.K."/>
            <person name="Mayhew G.F."/>
            <person name="Gregor J."/>
            <person name="Davis N.W."/>
            <person name="Kirkpatrick H.A."/>
            <person name="Goeden M.A."/>
            <person name="Rose D.J."/>
            <person name="Mau B."/>
            <person name="Shao Y."/>
        </authorList>
    </citation>
    <scope>NUCLEOTIDE SEQUENCE [LARGE SCALE GENOMIC DNA]</scope>
    <source>
        <strain>K12 / MG1655 / ATCC 47076</strain>
    </source>
</reference>
<reference key="5">
    <citation type="journal article" date="2006" name="Mol. Syst. Biol.">
        <title>Highly accurate genome sequences of Escherichia coli K-12 strains MG1655 and W3110.</title>
        <authorList>
            <person name="Hayashi K."/>
            <person name="Morooka N."/>
            <person name="Yamamoto Y."/>
            <person name="Fujita K."/>
            <person name="Isono K."/>
            <person name="Choi S."/>
            <person name="Ohtsubo E."/>
            <person name="Baba T."/>
            <person name="Wanner B.L."/>
            <person name="Mori H."/>
            <person name="Horiuchi T."/>
        </authorList>
    </citation>
    <scope>NUCLEOTIDE SEQUENCE [LARGE SCALE GENOMIC DNA]</scope>
    <source>
        <strain>K12 / W3110 / ATCC 27325 / DSM 5911</strain>
    </source>
</reference>
<reference key="6">
    <citation type="journal article" date="1995" name="J. Bacteriol.">
        <title>Genetic analysis of the dTDP-rhamnose biosynthesis region of the Escherichia coli VW187 (O7:K1) rfb gene cluster: identification of functional homologs of rfbB and rfbA in the rff cluster and correct location of the rffE gene.</title>
        <authorList>
            <person name="Marolda C.L."/>
            <person name="Valvano M.A."/>
        </authorList>
    </citation>
    <scope>PATHWAY</scope>
</reference>
<keyword id="KW-0448">Lipopolysaccharide biosynthesis</keyword>
<keyword id="KW-0456">Lyase</keyword>
<keyword id="KW-0520">NAD</keyword>
<keyword id="KW-1185">Reference proteome</keyword>
<accession>P37759</accession>
<accession>P78082</accession>
<proteinExistence type="inferred from homology"/>